<name>DUT_EHV4</name>
<evidence type="ECO:0000255" key="1">
    <source>
        <dbReference type="HAMAP-Rule" id="MF_04031"/>
    </source>
</evidence>
<proteinExistence type="inferred from homology"/>
<gene>
    <name evidence="1" type="primary">DUT</name>
    <name type="ordered locus">9</name>
    <name type="ordered locus">B3</name>
</gene>
<organismHost>
    <name type="scientific">Equus caballus</name>
    <name type="common">Horse</name>
    <dbReference type="NCBI Taxonomy" id="9796"/>
</organismHost>
<organism>
    <name type="scientific">Equine herpesvirus 4 (strain 1942)</name>
    <name type="common">EHV-4</name>
    <name type="synonym">Equine rhinopneumonitis virus</name>
    <dbReference type="NCBI Taxonomy" id="10333"/>
    <lineage>
        <taxon>Viruses</taxon>
        <taxon>Duplodnaviria</taxon>
        <taxon>Heunggongvirae</taxon>
        <taxon>Peploviricota</taxon>
        <taxon>Herviviricetes</taxon>
        <taxon>Herpesvirales</taxon>
        <taxon>Orthoherpesviridae</taxon>
        <taxon>Alphaherpesvirinae</taxon>
        <taxon>Varicellovirus</taxon>
        <taxon>Varicellovirus equidalpha4</taxon>
        <taxon>Equid alphaherpesvirus 4</taxon>
    </lineage>
</organism>
<comment type="function">
    <text evidence="1">Involved in nucleotide metabolism: produces dUMP, the immediate precursor of thymidine nucleotides and decreases the intracellular concentration of dUTP to avoid uracil incorporation into viral DNA.</text>
</comment>
<comment type="catalytic activity">
    <reaction evidence="1">
        <text>dUTP + H2O = dUMP + diphosphate + H(+)</text>
        <dbReference type="Rhea" id="RHEA:10248"/>
        <dbReference type="ChEBI" id="CHEBI:15377"/>
        <dbReference type="ChEBI" id="CHEBI:15378"/>
        <dbReference type="ChEBI" id="CHEBI:33019"/>
        <dbReference type="ChEBI" id="CHEBI:61555"/>
        <dbReference type="ChEBI" id="CHEBI:246422"/>
        <dbReference type="EC" id="3.6.1.23"/>
    </reaction>
</comment>
<comment type="cofactor">
    <cofactor evidence="1">
        <name>Mg(2+)</name>
        <dbReference type="ChEBI" id="CHEBI:18420"/>
    </cofactor>
</comment>
<comment type="similarity">
    <text evidence="1">Belongs to the dUTPase family.</text>
</comment>
<feature type="chain" id="PRO_0000182953" description="Deoxyuridine 5'-triphosphate nucleotidohydrolase">
    <location>
        <begin position="1"/>
        <end position="326"/>
    </location>
</feature>
<feature type="binding site" evidence="1">
    <location>
        <begin position="218"/>
        <end position="220"/>
    </location>
    <ligand>
        <name>substrate</name>
    </ligand>
</feature>
<feature type="binding site" evidence="1">
    <location>
        <begin position="321"/>
        <end position="322"/>
    </location>
    <ligand>
        <name>substrate</name>
    </ligand>
</feature>
<accession>Q00030</accession>
<dbReference type="EC" id="3.6.1.23" evidence="1"/>
<dbReference type="EMBL" id="X17684">
    <property type="protein sequence ID" value="CAA35671.1"/>
    <property type="molecule type" value="Genomic_DNA"/>
</dbReference>
<dbReference type="PIR" id="S36705">
    <property type="entry name" value="S36705"/>
</dbReference>
<dbReference type="SMR" id="Q00030"/>
<dbReference type="GO" id="GO:0004170">
    <property type="term" value="F:dUTP diphosphatase activity"/>
    <property type="evidence" value="ECO:0007669"/>
    <property type="project" value="UniProtKB-EC"/>
</dbReference>
<dbReference type="GO" id="GO:0046872">
    <property type="term" value="F:metal ion binding"/>
    <property type="evidence" value="ECO:0007669"/>
    <property type="project" value="UniProtKB-KW"/>
</dbReference>
<dbReference type="GO" id="GO:0046080">
    <property type="term" value="P:dUTP metabolic process"/>
    <property type="evidence" value="ECO:0007669"/>
    <property type="project" value="InterPro"/>
</dbReference>
<dbReference type="Gene3D" id="2.70.40.10">
    <property type="match status" value="1"/>
</dbReference>
<dbReference type="HAMAP" id="MF_04031">
    <property type="entry name" value="HSV_DUT"/>
    <property type="match status" value="1"/>
</dbReference>
<dbReference type="InterPro" id="IPR029054">
    <property type="entry name" value="dUTPase-like"/>
</dbReference>
<dbReference type="InterPro" id="IPR036157">
    <property type="entry name" value="dUTPase-like_sf"/>
</dbReference>
<dbReference type="InterPro" id="IPR034745">
    <property type="entry name" value="HSV_DUT"/>
</dbReference>
<dbReference type="Pfam" id="PF00692">
    <property type="entry name" value="dUTPase"/>
    <property type="match status" value="1"/>
</dbReference>
<dbReference type="SUPFAM" id="SSF51283">
    <property type="entry name" value="dUTPase-like"/>
    <property type="match status" value="1"/>
</dbReference>
<sequence>MASATNLADNIVVVECSNGWEARAEADGRLLVLINNHTVELSAGLGSAGEFYSVLTDVGVRVACSSGYAIVLAQISGLPHVGREPGNFSNITFTGNLANYYTAYGIVDSGYRGVVKAVQFANGVNTVVPPGCMSLGLVLVKLSTETINVTNINLTENGRSPRVNIFYDYFAPKRDEDAGYDISAQTNATIEPDESYFVELPIVFSSSNPAVTPCIFGRSSMNRRGLIVLPTRWVTGRTCCFFILNINKYPVYITKGQRVAQLVLTEDIDEALIPTNVNYNTPFPTYSPTGAVKHNPTPILWKFTEAFDHDAPSSARSEGGFGSTGL</sequence>
<protein>
    <recommendedName>
        <fullName evidence="1">Deoxyuridine 5'-triphosphate nucleotidohydrolase</fullName>
        <shortName evidence="1">dUTPase</shortName>
        <ecNumber evidence="1">3.6.1.23</ecNumber>
    </recommendedName>
    <alternativeName>
        <fullName evidence="1">dUTP pyrophosphatase</fullName>
    </alternativeName>
</protein>
<keyword id="KW-0378">Hydrolase</keyword>
<keyword id="KW-0460">Magnesium</keyword>
<keyword id="KW-0479">Metal-binding</keyword>
<keyword id="KW-0546">Nucleotide metabolism</keyword>
<reference key="1">
    <citation type="journal article" date="1991" name="J. Virol.">
        <title>Antigenic and protein sequence homology between VP13/14, a herpes simplex virus type 1 tegument protein, and gp10, a glycoprotein of equine herpesvirus 1 and 4.</title>
        <authorList>
            <person name="Whittaker G.R."/>
            <person name="Riggio M.P."/>
            <person name="Halliburton I.W."/>
            <person name="Killington R.A."/>
            <person name="Allen G.P."/>
            <person name="Meredith D.M."/>
        </authorList>
    </citation>
    <scope>NUCLEOTIDE SEQUENCE [GENOMIC DNA]</scope>
</reference>